<evidence type="ECO:0000255" key="1">
    <source>
        <dbReference type="HAMAP-Rule" id="MF_00018"/>
    </source>
</evidence>
<evidence type="ECO:0000255" key="2">
    <source>
        <dbReference type="PROSITE-ProRule" id="PRU01182"/>
    </source>
</evidence>
<sequence>MDEWYGQVAPREKLLKYGAAVLTDAELLAIFLRTGIPGMHVMKMAEYLIETFGSLHGLISADYQTLCAHKGIGASKYSQIQAIGELACRCFSSHLMRESVLLNPGITQKFLQNILSHREREIFLVVFLDNQHRVIRHEEMFTGTISSVEVHPREIVREALKVNAAALILAHNHPSGKAEPSQADRLITTQVIKACSLLDIRVLDHLVVGRGECVSFAERGWL</sequence>
<reference key="1">
    <citation type="submission" date="2007-02" db="EMBL/GenBank/DDBJ databases">
        <title>Complete sequence of chromosome of Yersinia pestis Pestoides F.</title>
        <authorList>
            <consortium name="US DOE Joint Genome Institute"/>
            <person name="Copeland A."/>
            <person name="Lucas S."/>
            <person name="Lapidus A."/>
            <person name="Barry K."/>
            <person name="Detter J.C."/>
            <person name="Glavina del Rio T."/>
            <person name="Hammon N."/>
            <person name="Israni S."/>
            <person name="Dalin E."/>
            <person name="Tice H."/>
            <person name="Pitluck S."/>
            <person name="Di Bartolo G."/>
            <person name="Chain P."/>
            <person name="Malfatti S."/>
            <person name="Shin M."/>
            <person name="Vergez L."/>
            <person name="Schmutz J."/>
            <person name="Larimer F."/>
            <person name="Land M."/>
            <person name="Hauser L."/>
            <person name="Worsham P."/>
            <person name="Chu M."/>
            <person name="Bearden S."/>
            <person name="Garcia E."/>
            <person name="Richardson P."/>
        </authorList>
    </citation>
    <scope>NUCLEOTIDE SEQUENCE [LARGE SCALE GENOMIC DNA]</scope>
    <source>
        <strain>Pestoides F</strain>
    </source>
</reference>
<name>Y3856_YERPP</name>
<accession>A4TSD7</accession>
<dbReference type="EMBL" id="CP000668">
    <property type="protein sequence ID" value="ABP42199.1"/>
    <property type="molecule type" value="Genomic_DNA"/>
</dbReference>
<dbReference type="SMR" id="A4TSD7"/>
<dbReference type="KEGG" id="ypp:YPDSF_3856"/>
<dbReference type="PATRIC" id="fig|386656.14.peg.662"/>
<dbReference type="GO" id="GO:0046872">
    <property type="term" value="F:metal ion binding"/>
    <property type="evidence" value="ECO:0007669"/>
    <property type="project" value="UniProtKB-KW"/>
</dbReference>
<dbReference type="GO" id="GO:0008237">
    <property type="term" value="F:metallopeptidase activity"/>
    <property type="evidence" value="ECO:0007669"/>
    <property type="project" value="UniProtKB-KW"/>
</dbReference>
<dbReference type="GO" id="GO:0006508">
    <property type="term" value="P:proteolysis"/>
    <property type="evidence" value="ECO:0007669"/>
    <property type="project" value="UniProtKB-KW"/>
</dbReference>
<dbReference type="CDD" id="cd08071">
    <property type="entry name" value="MPN_DUF2466"/>
    <property type="match status" value="1"/>
</dbReference>
<dbReference type="Gene3D" id="3.40.140.10">
    <property type="entry name" value="Cytidine Deaminase, domain 2"/>
    <property type="match status" value="1"/>
</dbReference>
<dbReference type="HAMAP" id="MF_00018">
    <property type="entry name" value="UPF0758_YicR"/>
    <property type="match status" value="1"/>
</dbReference>
<dbReference type="InterPro" id="IPR037518">
    <property type="entry name" value="MPN"/>
</dbReference>
<dbReference type="InterPro" id="IPR025657">
    <property type="entry name" value="RadC_JAB"/>
</dbReference>
<dbReference type="InterPro" id="IPR010994">
    <property type="entry name" value="RuvA_2-like"/>
</dbReference>
<dbReference type="InterPro" id="IPR001405">
    <property type="entry name" value="UPF0758"/>
</dbReference>
<dbReference type="InterPro" id="IPR020891">
    <property type="entry name" value="UPF0758_CS"/>
</dbReference>
<dbReference type="InterPro" id="IPR046778">
    <property type="entry name" value="UPF0758_N"/>
</dbReference>
<dbReference type="InterPro" id="IPR022820">
    <property type="entry name" value="UPF0758_YicR"/>
</dbReference>
<dbReference type="NCBIfam" id="NF000642">
    <property type="entry name" value="PRK00024.1"/>
    <property type="match status" value="1"/>
</dbReference>
<dbReference type="NCBIfam" id="TIGR00608">
    <property type="entry name" value="radc"/>
    <property type="match status" value="1"/>
</dbReference>
<dbReference type="PANTHER" id="PTHR30471">
    <property type="entry name" value="DNA REPAIR PROTEIN RADC"/>
    <property type="match status" value="1"/>
</dbReference>
<dbReference type="PANTHER" id="PTHR30471:SF3">
    <property type="entry name" value="UPF0758 PROTEIN YEES-RELATED"/>
    <property type="match status" value="1"/>
</dbReference>
<dbReference type="Pfam" id="PF04002">
    <property type="entry name" value="RadC"/>
    <property type="match status" value="1"/>
</dbReference>
<dbReference type="Pfam" id="PF20582">
    <property type="entry name" value="UPF0758_N"/>
    <property type="match status" value="1"/>
</dbReference>
<dbReference type="SUPFAM" id="SSF47781">
    <property type="entry name" value="RuvA domain 2-like"/>
    <property type="match status" value="1"/>
</dbReference>
<dbReference type="PROSITE" id="PS50249">
    <property type="entry name" value="MPN"/>
    <property type="match status" value="1"/>
</dbReference>
<dbReference type="PROSITE" id="PS01302">
    <property type="entry name" value="UPF0758"/>
    <property type="match status" value="1"/>
</dbReference>
<protein>
    <recommendedName>
        <fullName evidence="1">UPF0758 protein YPDSF_3856</fullName>
    </recommendedName>
</protein>
<comment type="similarity">
    <text evidence="1">Belongs to the UPF0758 family. YicR subfamily.</text>
</comment>
<feature type="chain" id="PRO_1000001709" description="UPF0758 protein YPDSF_3856">
    <location>
        <begin position="1"/>
        <end position="222"/>
    </location>
</feature>
<feature type="domain" description="MPN" evidence="2">
    <location>
        <begin position="100"/>
        <end position="222"/>
    </location>
</feature>
<feature type="short sequence motif" description="JAMM motif" evidence="2">
    <location>
        <begin position="171"/>
        <end position="184"/>
    </location>
</feature>
<feature type="binding site" evidence="2">
    <location>
        <position position="171"/>
    </location>
    <ligand>
        <name>Zn(2+)</name>
        <dbReference type="ChEBI" id="CHEBI:29105"/>
        <note>catalytic</note>
    </ligand>
</feature>
<feature type="binding site" evidence="2">
    <location>
        <position position="173"/>
    </location>
    <ligand>
        <name>Zn(2+)</name>
        <dbReference type="ChEBI" id="CHEBI:29105"/>
        <note>catalytic</note>
    </ligand>
</feature>
<feature type="binding site" evidence="2">
    <location>
        <position position="184"/>
    </location>
    <ligand>
        <name>Zn(2+)</name>
        <dbReference type="ChEBI" id="CHEBI:29105"/>
        <note>catalytic</note>
    </ligand>
</feature>
<proteinExistence type="inferred from homology"/>
<gene>
    <name type="ordered locus">YPDSF_3856</name>
</gene>
<organism>
    <name type="scientific">Yersinia pestis (strain Pestoides F)</name>
    <dbReference type="NCBI Taxonomy" id="386656"/>
    <lineage>
        <taxon>Bacteria</taxon>
        <taxon>Pseudomonadati</taxon>
        <taxon>Pseudomonadota</taxon>
        <taxon>Gammaproteobacteria</taxon>
        <taxon>Enterobacterales</taxon>
        <taxon>Yersiniaceae</taxon>
        <taxon>Yersinia</taxon>
    </lineage>
</organism>
<keyword id="KW-0378">Hydrolase</keyword>
<keyword id="KW-0479">Metal-binding</keyword>
<keyword id="KW-0482">Metalloprotease</keyword>
<keyword id="KW-0645">Protease</keyword>
<keyword id="KW-0862">Zinc</keyword>